<gene>
    <name type="primary">MT-CYB</name>
    <name type="synonym">COB</name>
    <name type="synonym">CYTB</name>
    <name type="synonym">MTCYB</name>
</gene>
<accession>Q9TDQ5</accession>
<name>CYB_MUNVU</name>
<protein>
    <recommendedName>
        <fullName>Cytochrome b</fullName>
    </recommendedName>
    <alternativeName>
        <fullName>Complex III subunit 3</fullName>
    </alternativeName>
    <alternativeName>
        <fullName>Complex III subunit III</fullName>
    </alternativeName>
    <alternativeName>
        <fullName>Cytochrome b-c1 complex subunit 3</fullName>
    </alternativeName>
    <alternativeName>
        <fullName>Ubiquinol-cytochrome-c reductase complex cytochrome b subunit</fullName>
    </alternativeName>
</protein>
<proteinExistence type="inferred from homology"/>
<comment type="function">
    <text evidence="2">Component of the ubiquinol-cytochrome c reductase complex (complex III or cytochrome b-c1 complex) that is part of the mitochondrial respiratory chain. The b-c1 complex mediates electron transfer from ubiquinol to cytochrome c. Contributes to the generation of a proton gradient across the mitochondrial membrane that is then used for ATP synthesis.</text>
</comment>
<comment type="cofactor">
    <cofactor evidence="2">
        <name>heme b</name>
        <dbReference type="ChEBI" id="CHEBI:60344"/>
    </cofactor>
    <text evidence="2">Binds 2 heme b groups non-covalently.</text>
</comment>
<comment type="subunit">
    <text evidence="2">The cytochrome bc1 complex contains 11 subunits: 3 respiratory subunits (MT-CYB, CYC1 and UQCRFS1), 2 core proteins (UQCRC1 and UQCRC2) and 6 low-molecular weight proteins (UQCRH/QCR6, UQCRB/QCR7, UQCRQ/QCR8, UQCR10/QCR9, UQCR11/QCR10 and a cleavage product of UQCRFS1). This cytochrome bc1 complex then forms a dimer.</text>
</comment>
<comment type="subcellular location">
    <subcellularLocation>
        <location evidence="2">Mitochondrion inner membrane</location>
        <topology evidence="2">Multi-pass membrane protein</topology>
    </subcellularLocation>
</comment>
<comment type="miscellaneous">
    <text evidence="1">Heme 1 (or BL or b562) is low-potential and absorbs at about 562 nm, and heme 2 (or BH or b566) is high-potential and absorbs at about 566 nm.</text>
</comment>
<comment type="similarity">
    <text evidence="3 4">Belongs to the cytochrome b family.</text>
</comment>
<comment type="caution">
    <text evidence="2">The full-length protein contains only eight transmembrane helices, not nine as predicted by bioinformatics tools.</text>
</comment>
<reference key="1">
    <citation type="journal article" date="1998" name="Anim. Conserv.">
        <title>Description of Muntiacus truongsonensis, a new species of muntjac (Artiodactyla: Muntiacidae) from Central Vietnam, and implications for conservation.</title>
        <authorList>
            <person name="Giao P.M."/>
            <person name="Tuoc D."/>
            <person name="Dung V.V."/>
            <person name="Wikramanayake E.D."/>
            <person name="Amato G."/>
            <person name="Arctander P."/>
            <person name="MacKinnon J.R."/>
        </authorList>
    </citation>
    <scope>NUCLEOTIDE SEQUENCE [GENOMIC DNA]</scope>
</reference>
<organism>
    <name type="scientific">Muntiacus vuquangensis</name>
    <name type="common">Giant muntjac</name>
    <name type="synonym">Megamuntiacus vuquangensis</name>
    <dbReference type="NCBI Taxonomy" id="109296"/>
    <lineage>
        <taxon>Eukaryota</taxon>
        <taxon>Metazoa</taxon>
        <taxon>Chordata</taxon>
        <taxon>Craniata</taxon>
        <taxon>Vertebrata</taxon>
        <taxon>Euteleostomi</taxon>
        <taxon>Mammalia</taxon>
        <taxon>Eutheria</taxon>
        <taxon>Laurasiatheria</taxon>
        <taxon>Artiodactyla</taxon>
        <taxon>Ruminantia</taxon>
        <taxon>Pecora</taxon>
        <taxon>Cervidae</taxon>
        <taxon>Muntiacinae</taxon>
        <taxon>Muntiacus</taxon>
    </lineage>
</organism>
<keyword id="KW-0249">Electron transport</keyword>
<keyword id="KW-0349">Heme</keyword>
<keyword id="KW-0408">Iron</keyword>
<keyword id="KW-0472">Membrane</keyword>
<keyword id="KW-0479">Metal-binding</keyword>
<keyword id="KW-0496">Mitochondrion</keyword>
<keyword id="KW-0999">Mitochondrion inner membrane</keyword>
<keyword id="KW-0679">Respiratory chain</keyword>
<keyword id="KW-0812">Transmembrane</keyword>
<keyword id="KW-1133">Transmembrane helix</keyword>
<keyword id="KW-0813">Transport</keyword>
<keyword id="KW-0830">Ubiquinone</keyword>
<geneLocation type="mitochondrion"/>
<evidence type="ECO:0000250" key="1"/>
<evidence type="ECO:0000250" key="2">
    <source>
        <dbReference type="UniProtKB" id="P00157"/>
    </source>
</evidence>
<evidence type="ECO:0000255" key="3">
    <source>
        <dbReference type="PROSITE-ProRule" id="PRU00967"/>
    </source>
</evidence>
<evidence type="ECO:0000255" key="4">
    <source>
        <dbReference type="PROSITE-ProRule" id="PRU00968"/>
    </source>
</evidence>
<sequence length="379" mass="42791">MTNIRKTHPLMKIVNNAFIDLPAPSNISSWWNFGSLLGICLILQILTGLFLAMHYTSDTMTAFSSVAHICRDVNYGWIIRYMHANGASMFFICLFIHVGRGLYYGSYTFLETWNIGVILLFTVMATAFVGYVLPWGQMSFWGATVITNLLSAIPYIGTNLVEWIWGGFSVDKATLTRFFAFHFILPFIIAALAMVHLLFLHETGSNNPTGIPSDADKIPFXPYYTIKDILGALLLILFLMLLVLFMPDLLGDPDNYTPANPLNTPPHIKPEWYFLFAYAILRSIPNKLGGVLALIXSILILILMPLLHTSKQRSMIFRPLSQCLFWILVADLLTLTWIGGXXVEHPFIIIGQLASILYFLIILVLMPMISTIENNLLKW</sequence>
<dbReference type="EMBL" id="AF042720">
    <property type="protein sequence ID" value="AAD55669.1"/>
    <property type="molecule type" value="Genomic_DNA"/>
</dbReference>
<dbReference type="GO" id="GO:0005743">
    <property type="term" value="C:mitochondrial inner membrane"/>
    <property type="evidence" value="ECO:0007669"/>
    <property type="project" value="UniProtKB-SubCell"/>
</dbReference>
<dbReference type="GO" id="GO:0045275">
    <property type="term" value="C:respiratory chain complex III"/>
    <property type="evidence" value="ECO:0007669"/>
    <property type="project" value="InterPro"/>
</dbReference>
<dbReference type="GO" id="GO:0046872">
    <property type="term" value="F:metal ion binding"/>
    <property type="evidence" value="ECO:0007669"/>
    <property type="project" value="UniProtKB-KW"/>
</dbReference>
<dbReference type="GO" id="GO:0008121">
    <property type="term" value="F:ubiquinol-cytochrome-c reductase activity"/>
    <property type="evidence" value="ECO:0007669"/>
    <property type="project" value="InterPro"/>
</dbReference>
<dbReference type="GO" id="GO:0006122">
    <property type="term" value="P:mitochondrial electron transport, ubiquinol to cytochrome c"/>
    <property type="evidence" value="ECO:0007669"/>
    <property type="project" value="TreeGrafter"/>
</dbReference>
<dbReference type="CDD" id="cd00290">
    <property type="entry name" value="cytochrome_b_C"/>
    <property type="match status" value="1"/>
</dbReference>
<dbReference type="CDD" id="cd00284">
    <property type="entry name" value="Cytochrome_b_N"/>
    <property type="match status" value="1"/>
</dbReference>
<dbReference type="FunFam" id="1.20.810.10:FF:000002">
    <property type="entry name" value="Cytochrome b"/>
    <property type="match status" value="1"/>
</dbReference>
<dbReference type="Gene3D" id="1.20.810.10">
    <property type="entry name" value="Cytochrome Bc1 Complex, Chain C"/>
    <property type="match status" value="1"/>
</dbReference>
<dbReference type="InterPro" id="IPR005798">
    <property type="entry name" value="Cyt_b/b6_C"/>
</dbReference>
<dbReference type="InterPro" id="IPR036150">
    <property type="entry name" value="Cyt_b/b6_C_sf"/>
</dbReference>
<dbReference type="InterPro" id="IPR005797">
    <property type="entry name" value="Cyt_b/b6_N"/>
</dbReference>
<dbReference type="InterPro" id="IPR027387">
    <property type="entry name" value="Cytb/b6-like_sf"/>
</dbReference>
<dbReference type="InterPro" id="IPR030689">
    <property type="entry name" value="Cytochrome_b"/>
</dbReference>
<dbReference type="InterPro" id="IPR048260">
    <property type="entry name" value="Cytochrome_b_C_euk/bac"/>
</dbReference>
<dbReference type="InterPro" id="IPR048259">
    <property type="entry name" value="Cytochrome_b_N_euk/bac"/>
</dbReference>
<dbReference type="InterPro" id="IPR016174">
    <property type="entry name" value="Di-haem_cyt_TM"/>
</dbReference>
<dbReference type="PANTHER" id="PTHR19271">
    <property type="entry name" value="CYTOCHROME B"/>
    <property type="match status" value="1"/>
</dbReference>
<dbReference type="PANTHER" id="PTHR19271:SF16">
    <property type="entry name" value="CYTOCHROME B"/>
    <property type="match status" value="1"/>
</dbReference>
<dbReference type="Pfam" id="PF00032">
    <property type="entry name" value="Cytochrom_B_C"/>
    <property type="match status" value="1"/>
</dbReference>
<dbReference type="Pfam" id="PF00033">
    <property type="entry name" value="Cytochrome_B"/>
    <property type="match status" value="1"/>
</dbReference>
<dbReference type="PIRSF" id="PIRSF038885">
    <property type="entry name" value="COB"/>
    <property type="match status" value="1"/>
</dbReference>
<dbReference type="SUPFAM" id="SSF81648">
    <property type="entry name" value="a domain/subunit of cytochrome bc1 complex (Ubiquinol-cytochrome c reductase)"/>
    <property type="match status" value="1"/>
</dbReference>
<dbReference type="SUPFAM" id="SSF81342">
    <property type="entry name" value="Transmembrane di-heme cytochromes"/>
    <property type="match status" value="1"/>
</dbReference>
<dbReference type="PROSITE" id="PS51003">
    <property type="entry name" value="CYTB_CTER"/>
    <property type="match status" value="1"/>
</dbReference>
<dbReference type="PROSITE" id="PS51002">
    <property type="entry name" value="CYTB_NTER"/>
    <property type="match status" value="1"/>
</dbReference>
<feature type="chain" id="PRO_0000254818" description="Cytochrome b">
    <location>
        <begin position="1"/>
        <end position="379"/>
    </location>
</feature>
<feature type="transmembrane region" description="Helical" evidence="2">
    <location>
        <begin position="33"/>
        <end position="53"/>
    </location>
</feature>
<feature type="transmembrane region" description="Helical" evidence="2">
    <location>
        <begin position="77"/>
        <end position="98"/>
    </location>
</feature>
<feature type="transmembrane region" description="Helical" evidence="2">
    <location>
        <begin position="113"/>
        <end position="133"/>
    </location>
</feature>
<feature type="transmembrane region" description="Helical" evidence="2">
    <location>
        <begin position="178"/>
        <end position="198"/>
    </location>
</feature>
<feature type="transmembrane region" description="Helical" evidence="2">
    <location>
        <begin position="226"/>
        <end position="246"/>
    </location>
</feature>
<feature type="transmembrane region" description="Helical" evidence="2">
    <location>
        <begin position="288"/>
        <end position="308"/>
    </location>
</feature>
<feature type="transmembrane region" description="Helical" evidence="2">
    <location>
        <begin position="320"/>
        <end position="340"/>
    </location>
</feature>
<feature type="transmembrane region" description="Helical" evidence="2">
    <location>
        <begin position="347"/>
        <end position="367"/>
    </location>
</feature>
<feature type="binding site" description="axial binding residue" evidence="2">
    <location>
        <position position="83"/>
    </location>
    <ligand>
        <name>heme b</name>
        <dbReference type="ChEBI" id="CHEBI:60344"/>
        <label>b562</label>
    </ligand>
    <ligandPart>
        <name>Fe</name>
        <dbReference type="ChEBI" id="CHEBI:18248"/>
    </ligandPart>
</feature>
<feature type="binding site" description="axial binding residue" evidence="2">
    <location>
        <position position="97"/>
    </location>
    <ligand>
        <name>heme b</name>
        <dbReference type="ChEBI" id="CHEBI:60344"/>
        <label>b566</label>
    </ligand>
    <ligandPart>
        <name>Fe</name>
        <dbReference type="ChEBI" id="CHEBI:18248"/>
    </ligandPart>
</feature>
<feature type="binding site" description="axial binding residue" evidence="2">
    <location>
        <position position="182"/>
    </location>
    <ligand>
        <name>heme b</name>
        <dbReference type="ChEBI" id="CHEBI:60344"/>
        <label>b562</label>
    </ligand>
    <ligandPart>
        <name>Fe</name>
        <dbReference type="ChEBI" id="CHEBI:18248"/>
    </ligandPart>
</feature>
<feature type="binding site" description="axial binding residue" evidence="2">
    <location>
        <position position="196"/>
    </location>
    <ligand>
        <name>heme b</name>
        <dbReference type="ChEBI" id="CHEBI:60344"/>
        <label>b566</label>
    </ligand>
    <ligandPart>
        <name>Fe</name>
        <dbReference type="ChEBI" id="CHEBI:18248"/>
    </ligandPart>
</feature>
<feature type="binding site" evidence="2">
    <location>
        <position position="201"/>
    </location>
    <ligand>
        <name>a ubiquinone</name>
        <dbReference type="ChEBI" id="CHEBI:16389"/>
    </ligand>
</feature>